<reference key="1">
    <citation type="submission" date="2007-02" db="EMBL/GenBank/DDBJ databases">
        <title>Complete sequence of chromosome of Yersinia pestis Pestoides F.</title>
        <authorList>
            <consortium name="US DOE Joint Genome Institute"/>
            <person name="Copeland A."/>
            <person name="Lucas S."/>
            <person name="Lapidus A."/>
            <person name="Barry K."/>
            <person name="Detter J.C."/>
            <person name="Glavina del Rio T."/>
            <person name="Hammon N."/>
            <person name="Israni S."/>
            <person name="Dalin E."/>
            <person name="Tice H."/>
            <person name="Pitluck S."/>
            <person name="Di Bartolo G."/>
            <person name="Chain P."/>
            <person name="Malfatti S."/>
            <person name="Shin M."/>
            <person name="Vergez L."/>
            <person name="Schmutz J."/>
            <person name="Larimer F."/>
            <person name="Land M."/>
            <person name="Hauser L."/>
            <person name="Worsham P."/>
            <person name="Chu M."/>
            <person name="Bearden S."/>
            <person name="Garcia E."/>
            <person name="Richardson P."/>
        </authorList>
    </citation>
    <scope>NUCLEOTIDE SEQUENCE [LARGE SCALE GENOMIC DNA]</scope>
    <source>
        <strain>Pestoides F</strain>
    </source>
</reference>
<protein>
    <recommendedName>
        <fullName evidence="1">Dihydroorotase</fullName>
        <shortName evidence="1">DHOase</shortName>
        <ecNumber evidence="1">3.5.2.3</ecNumber>
    </recommendedName>
</protein>
<gene>
    <name evidence="1" type="primary">pyrC</name>
    <name type="ordered locus">YPDSF_1859</name>
</gene>
<keyword id="KW-0378">Hydrolase</keyword>
<keyword id="KW-0479">Metal-binding</keyword>
<keyword id="KW-0665">Pyrimidine biosynthesis</keyword>
<keyword id="KW-0862">Zinc</keyword>
<name>PYRC_YERPP</name>
<organism>
    <name type="scientific">Yersinia pestis (strain Pestoides F)</name>
    <dbReference type="NCBI Taxonomy" id="386656"/>
    <lineage>
        <taxon>Bacteria</taxon>
        <taxon>Pseudomonadati</taxon>
        <taxon>Pseudomonadota</taxon>
        <taxon>Gammaproteobacteria</taxon>
        <taxon>Enterobacterales</taxon>
        <taxon>Yersiniaceae</taxon>
        <taxon>Yersinia</taxon>
    </lineage>
</organism>
<evidence type="ECO:0000255" key="1">
    <source>
        <dbReference type="HAMAP-Rule" id="MF_00219"/>
    </source>
</evidence>
<proteinExistence type="inferred from homology"/>
<feature type="chain" id="PRO_1000024076" description="Dihydroorotase">
    <location>
        <begin position="1"/>
        <end position="348"/>
    </location>
</feature>
<feature type="active site" evidence="1">
    <location>
        <position position="251"/>
    </location>
</feature>
<feature type="binding site" evidence="1">
    <location>
        <position position="17"/>
    </location>
    <ligand>
        <name>Zn(2+)</name>
        <dbReference type="ChEBI" id="CHEBI:29105"/>
        <label>1</label>
    </ligand>
</feature>
<feature type="binding site" evidence="1">
    <location>
        <begin position="19"/>
        <end position="21"/>
    </location>
    <ligand>
        <name>substrate</name>
    </ligand>
</feature>
<feature type="binding site" evidence="1">
    <location>
        <position position="19"/>
    </location>
    <ligand>
        <name>Zn(2+)</name>
        <dbReference type="ChEBI" id="CHEBI:29105"/>
        <label>1</label>
    </ligand>
</feature>
<feature type="binding site" evidence="1">
    <location>
        <position position="45"/>
    </location>
    <ligand>
        <name>substrate</name>
    </ligand>
</feature>
<feature type="binding site" description="via carbamate group" evidence="1">
    <location>
        <position position="103"/>
    </location>
    <ligand>
        <name>Zn(2+)</name>
        <dbReference type="ChEBI" id="CHEBI:29105"/>
        <label>1</label>
    </ligand>
</feature>
<feature type="binding site" description="via carbamate group" evidence="1">
    <location>
        <position position="103"/>
    </location>
    <ligand>
        <name>Zn(2+)</name>
        <dbReference type="ChEBI" id="CHEBI:29105"/>
        <label>2</label>
    </ligand>
</feature>
<feature type="binding site" evidence="1">
    <location>
        <position position="140"/>
    </location>
    <ligand>
        <name>substrate</name>
    </ligand>
</feature>
<feature type="binding site" evidence="1">
    <location>
        <position position="140"/>
    </location>
    <ligand>
        <name>Zn(2+)</name>
        <dbReference type="ChEBI" id="CHEBI:29105"/>
        <label>2</label>
    </ligand>
</feature>
<feature type="binding site" evidence="1">
    <location>
        <position position="178"/>
    </location>
    <ligand>
        <name>Zn(2+)</name>
        <dbReference type="ChEBI" id="CHEBI:29105"/>
        <label>2</label>
    </ligand>
</feature>
<feature type="binding site" evidence="1">
    <location>
        <position position="223"/>
    </location>
    <ligand>
        <name>substrate</name>
    </ligand>
</feature>
<feature type="binding site" evidence="1">
    <location>
        <position position="251"/>
    </location>
    <ligand>
        <name>Zn(2+)</name>
        <dbReference type="ChEBI" id="CHEBI:29105"/>
        <label>1</label>
    </ligand>
</feature>
<feature type="binding site" evidence="1">
    <location>
        <position position="255"/>
    </location>
    <ligand>
        <name>substrate</name>
    </ligand>
</feature>
<feature type="binding site" evidence="1">
    <location>
        <position position="267"/>
    </location>
    <ligand>
        <name>substrate</name>
    </ligand>
</feature>
<feature type="modified residue" description="N6-carboxylysine" evidence="1">
    <location>
        <position position="103"/>
    </location>
</feature>
<sequence>MTAQPQTLKIRRPDDWHIHLRDDEMLSTVLPYTSEVFARAIVMPNLAQPITTVASAIAYRERILAAVPAGHKFTPLMTCYLTNSLDAKELTTGFEQGVFTAAKLYPANATTNSTHGVSDIPAIYPLFEQMQKIGMPLLIHGEVTDAAVDIFDREARFIDQILEPIRQKFPELKIVFEHITTKDAADYVLAGNRFLGATVTPQHLMFNRNHMLVGGIRPHLFCLPILKRSTHQQALRAAVASGSDRFFLGTDSAPHAKHRKESSCGCAGVFNAPAALPAYASVFEELNALQHLEAFCALNGPRFYGLPVNDDVVELVRTPFLQPEEIPLGNESVIPFLAGQTLNWSVKR</sequence>
<dbReference type="EC" id="3.5.2.3" evidence="1"/>
<dbReference type="EMBL" id="CP000668">
    <property type="protein sequence ID" value="ABP40244.1"/>
    <property type="molecule type" value="Genomic_DNA"/>
</dbReference>
<dbReference type="RefSeq" id="WP_002213109.1">
    <property type="nucleotide sequence ID" value="NZ_CP009715.1"/>
</dbReference>
<dbReference type="SMR" id="A4TLT2"/>
<dbReference type="MEROPS" id="M38.A02"/>
<dbReference type="GeneID" id="57976984"/>
<dbReference type="KEGG" id="ypp:YPDSF_1859"/>
<dbReference type="PATRIC" id="fig|386656.14.peg.3314"/>
<dbReference type="UniPathway" id="UPA00070">
    <property type="reaction ID" value="UER00117"/>
</dbReference>
<dbReference type="GO" id="GO:0005829">
    <property type="term" value="C:cytosol"/>
    <property type="evidence" value="ECO:0007669"/>
    <property type="project" value="TreeGrafter"/>
</dbReference>
<dbReference type="GO" id="GO:0004151">
    <property type="term" value="F:dihydroorotase activity"/>
    <property type="evidence" value="ECO:0007669"/>
    <property type="project" value="UniProtKB-UniRule"/>
</dbReference>
<dbReference type="GO" id="GO:0008270">
    <property type="term" value="F:zinc ion binding"/>
    <property type="evidence" value="ECO:0007669"/>
    <property type="project" value="UniProtKB-UniRule"/>
</dbReference>
<dbReference type="GO" id="GO:0006207">
    <property type="term" value="P:'de novo' pyrimidine nucleobase biosynthetic process"/>
    <property type="evidence" value="ECO:0007669"/>
    <property type="project" value="TreeGrafter"/>
</dbReference>
<dbReference type="GO" id="GO:0044205">
    <property type="term" value="P:'de novo' UMP biosynthetic process"/>
    <property type="evidence" value="ECO:0007669"/>
    <property type="project" value="UniProtKB-UniRule"/>
</dbReference>
<dbReference type="CDD" id="cd01294">
    <property type="entry name" value="DHOase"/>
    <property type="match status" value="1"/>
</dbReference>
<dbReference type="FunFam" id="3.20.20.140:FF:000006">
    <property type="entry name" value="Dihydroorotase"/>
    <property type="match status" value="1"/>
</dbReference>
<dbReference type="Gene3D" id="3.20.20.140">
    <property type="entry name" value="Metal-dependent hydrolases"/>
    <property type="match status" value="1"/>
</dbReference>
<dbReference type="HAMAP" id="MF_00219">
    <property type="entry name" value="PyrC_classII"/>
    <property type="match status" value="1"/>
</dbReference>
<dbReference type="InterPro" id="IPR006680">
    <property type="entry name" value="Amidohydro-rel"/>
</dbReference>
<dbReference type="InterPro" id="IPR004721">
    <property type="entry name" value="DHOdimr"/>
</dbReference>
<dbReference type="InterPro" id="IPR002195">
    <property type="entry name" value="Dihydroorotase_CS"/>
</dbReference>
<dbReference type="InterPro" id="IPR032466">
    <property type="entry name" value="Metal_Hydrolase"/>
</dbReference>
<dbReference type="NCBIfam" id="TIGR00856">
    <property type="entry name" value="pyrC_dimer"/>
    <property type="match status" value="1"/>
</dbReference>
<dbReference type="PANTHER" id="PTHR43137">
    <property type="entry name" value="DIHYDROOROTASE"/>
    <property type="match status" value="1"/>
</dbReference>
<dbReference type="PANTHER" id="PTHR43137:SF1">
    <property type="entry name" value="DIHYDROOROTASE"/>
    <property type="match status" value="1"/>
</dbReference>
<dbReference type="Pfam" id="PF01979">
    <property type="entry name" value="Amidohydro_1"/>
    <property type="match status" value="1"/>
</dbReference>
<dbReference type="PIRSF" id="PIRSF001237">
    <property type="entry name" value="DHOdimr"/>
    <property type="match status" value="1"/>
</dbReference>
<dbReference type="SUPFAM" id="SSF51556">
    <property type="entry name" value="Metallo-dependent hydrolases"/>
    <property type="match status" value="1"/>
</dbReference>
<dbReference type="PROSITE" id="PS00483">
    <property type="entry name" value="DIHYDROOROTASE_2"/>
    <property type="match status" value="1"/>
</dbReference>
<comment type="function">
    <text evidence="1">Catalyzes the reversible cyclization of carbamoyl aspartate to dihydroorotate.</text>
</comment>
<comment type="catalytic activity">
    <reaction evidence="1">
        <text>(S)-dihydroorotate + H2O = N-carbamoyl-L-aspartate + H(+)</text>
        <dbReference type="Rhea" id="RHEA:24296"/>
        <dbReference type="ChEBI" id="CHEBI:15377"/>
        <dbReference type="ChEBI" id="CHEBI:15378"/>
        <dbReference type="ChEBI" id="CHEBI:30864"/>
        <dbReference type="ChEBI" id="CHEBI:32814"/>
        <dbReference type="EC" id="3.5.2.3"/>
    </reaction>
</comment>
<comment type="cofactor">
    <cofactor evidence="1">
        <name>Zn(2+)</name>
        <dbReference type="ChEBI" id="CHEBI:29105"/>
    </cofactor>
    <text evidence="1">Binds 2 Zn(2+) ions per subunit.</text>
</comment>
<comment type="pathway">
    <text evidence="1">Pyrimidine metabolism; UMP biosynthesis via de novo pathway; (S)-dihydroorotate from bicarbonate: step 3/3.</text>
</comment>
<comment type="subunit">
    <text evidence="1">Homodimer.</text>
</comment>
<comment type="similarity">
    <text evidence="1">Belongs to the metallo-dependent hydrolases superfamily. DHOase family. Class II DHOase subfamily.</text>
</comment>
<accession>A4TLT2</accession>